<comment type="similarity">
    <text evidence="2">Belongs to the HAD-like hydrolase superfamily. SerB family.</text>
</comment>
<organism>
    <name type="scientific">Streptomyces azureus</name>
    <dbReference type="NCBI Taxonomy" id="146537"/>
    <lineage>
        <taxon>Bacteria</taxon>
        <taxon>Bacillati</taxon>
        <taxon>Actinomycetota</taxon>
        <taxon>Actinomycetes</taxon>
        <taxon>Kitasatosporales</taxon>
        <taxon>Streptomycetaceae</taxon>
        <taxon>Streptomyces</taxon>
    </lineage>
</organism>
<evidence type="ECO:0000250" key="1"/>
<evidence type="ECO:0000305" key="2"/>
<proteinExistence type="inferred from homology"/>
<keyword id="KW-0378">Hydrolase</keyword>
<keyword id="KW-0460">Magnesium</keyword>
<keyword id="KW-0479">Metal-binding</keyword>
<name>IMD_STRAJ</name>
<protein>
    <recommendedName>
        <fullName>Inhibition of morphological differentiation protein</fullName>
    </recommendedName>
</protein>
<feature type="chain" id="PRO_0000156896" description="Inhibition of morphological differentiation protein">
    <location>
        <begin position="1"/>
        <end position="277"/>
    </location>
</feature>
<feature type="binding site" evidence="1">
    <location>
        <position position="18"/>
    </location>
    <ligand>
        <name>Mg(2+)</name>
        <dbReference type="ChEBI" id="CHEBI:18420"/>
    </ligand>
</feature>
<feature type="binding site" evidence="1">
    <location>
        <position position="20"/>
    </location>
    <ligand>
        <name>Mg(2+)</name>
        <dbReference type="ChEBI" id="CHEBI:18420"/>
    </ligand>
</feature>
<feature type="binding site" evidence="1">
    <location>
        <position position="192"/>
    </location>
    <ligand>
        <name>Mg(2+)</name>
        <dbReference type="ChEBI" id="CHEBI:18420"/>
    </ligand>
</feature>
<accession>O33611</accession>
<dbReference type="EMBL" id="AB004855">
    <property type="protein sequence ID" value="BAA21085.1"/>
    <property type="molecule type" value="Genomic_DNA"/>
</dbReference>
<dbReference type="RefSeq" id="WP_059419055.1">
    <property type="nucleotide sequence ID" value="NZ_DF968297.1"/>
</dbReference>
<dbReference type="SMR" id="O33611"/>
<dbReference type="OrthoDB" id="25607at2"/>
<dbReference type="GO" id="GO:0016787">
    <property type="term" value="F:hydrolase activity"/>
    <property type="evidence" value="ECO:0007669"/>
    <property type="project" value="UniProtKB-KW"/>
</dbReference>
<dbReference type="GO" id="GO:0046872">
    <property type="term" value="F:metal ion binding"/>
    <property type="evidence" value="ECO:0007669"/>
    <property type="project" value="UniProtKB-KW"/>
</dbReference>
<dbReference type="CDD" id="cd02612">
    <property type="entry name" value="HAD_PGPPase"/>
    <property type="match status" value="1"/>
</dbReference>
<dbReference type="FunFam" id="3.40.50.1000:FF:000025">
    <property type="entry name" value="HAD hydrolase, family IB"/>
    <property type="match status" value="1"/>
</dbReference>
<dbReference type="FunFam" id="1.20.1440.100:FF:000001">
    <property type="entry name" value="Inhibition of morphological differentiation protein"/>
    <property type="match status" value="1"/>
</dbReference>
<dbReference type="Gene3D" id="3.40.50.1000">
    <property type="entry name" value="HAD superfamily/HAD-like"/>
    <property type="match status" value="1"/>
</dbReference>
<dbReference type="Gene3D" id="1.20.1440.100">
    <property type="entry name" value="SG protein - dephosphorylation function"/>
    <property type="match status" value="1"/>
</dbReference>
<dbReference type="InterPro" id="IPR050582">
    <property type="entry name" value="HAD-like_SerB"/>
</dbReference>
<dbReference type="InterPro" id="IPR036412">
    <property type="entry name" value="HAD-like_sf"/>
</dbReference>
<dbReference type="InterPro" id="IPR006385">
    <property type="entry name" value="HAD_hydro_SerB1"/>
</dbReference>
<dbReference type="InterPro" id="IPR023214">
    <property type="entry name" value="HAD_sf"/>
</dbReference>
<dbReference type="NCBIfam" id="TIGR01488">
    <property type="entry name" value="HAD-SF-IB"/>
    <property type="match status" value="1"/>
</dbReference>
<dbReference type="NCBIfam" id="TIGR01490">
    <property type="entry name" value="HAD-SF-IB-hyp1"/>
    <property type="match status" value="1"/>
</dbReference>
<dbReference type="PANTHER" id="PTHR43344:SF13">
    <property type="entry name" value="PHOSPHATASE RV3661-RELATED"/>
    <property type="match status" value="1"/>
</dbReference>
<dbReference type="PANTHER" id="PTHR43344">
    <property type="entry name" value="PHOSPHOSERINE PHOSPHATASE"/>
    <property type="match status" value="1"/>
</dbReference>
<dbReference type="Pfam" id="PF12710">
    <property type="entry name" value="HAD"/>
    <property type="match status" value="1"/>
</dbReference>
<dbReference type="SUPFAM" id="SSF56784">
    <property type="entry name" value="HAD-like"/>
    <property type="match status" value="1"/>
</dbReference>
<reference key="1">
    <citation type="submission" date="1997-06" db="EMBL/GenBank/DDBJ databases">
        <title>Analysis of chromosomal DNA fragment concerned with inhibition of morphological differentiation in Streptomyces azureus.</title>
        <authorList>
            <person name="Nishiyama T."/>
            <person name="Sakemi H."/>
            <person name="Doi K."/>
            <person name="Ogata S."/>
        </authorList>
    </citation>
    <scope>NUCLEOTIDE SEQUENCE [GENOMIC DNA]</scope>
    <source>
        <strain>ATCC 14921 / DSM 40106 / CBS 467.68 / ETH 28555 / JCM 4564 / NBRC 12744 / NRRL B-2655 / VKM Ac-719</strain>
    </source>
</reference>
<sequence>MLKGVENHSLPRTAAFFDLDKTVIAKSSTLTFSKSFYQGGLINRRAVLRTAYAQFVFLAGGADHDQMERMRAYLSALCRGWNVQQVKEIVAETLHDLIDPIIYDEAASLIEEHHTAGRDVVIVSTSGAEVVEPIGELLGADRVVATRMVVGDDGCFTGEVEYYAYGPTKAEAIRELAASEGYDLSRCYAYSDSATDVPMLESVGRPHAVNPDRALRREALARGWPILDFHRPVRLKQRIPGFSVPPRPALVAVAAIGAAAATAGLVWYANRRRANVA</sequence>